<proteinExistence type="evidence at protein level"/>
<gene>
    <name type="primary">ycfS</name>
    <name type="ordered locus">b1113</name>
    <name type="ordered locus">JW5820</name>
</gene>
<comment type="function">
    <text evidence="4">Responsible, at least in part, for anchoring of the major outer membrane lipoprotein (Lpp, also known as the Braun lipoprotein) to the peptidoglycan via a meso-diaminopimelyl-L-Lys- bond on the terminal residue of Lpp.</text>
</comment>
<comment type="pathway">
    <text>Cell wall biogenesis; peptidoglycan biosynthesis.</text>
</comment>
<comment type="subunit">
    <text evidence="5">Interacts with DsbG.</text>
</comment>
<comment type="subcellular location">
    <subcellularLocation>
        <location evidence="6">Periplasm</location>
    </subcellularLocation>
</comment>
<comment type="disruption phenotype">
    <text evidence="4">Simultaneous disruption of erfK, ybiS, ycfS and ynhG leads to loss of covalent anchoring of the major outer membrane lipoprotein (Lpp) to the peptidoglycan. Complementation with ycfS restores some of this anchoring.</text>
</comment>
<comment type="similarity">
    <text evidence="6">Belongs to the YkuD family.</text>
</comment>
<sequence>MMIKTRFSRWLTFFTFAAAVALALPAKANTWPLPPAGSRLVGENKFHVVENDGGSLEAIAKKYNVGFLALLQANPGVDPYVPRAGSVLTIPLQTLLPDAPREGIVINIAELRLYYYPPGKNSVTVYPIGIGQLGGDTLTPTMVTTVSDKRANPTWTPTANIRARYKAQGIELPAVVPAGLDNPMGHHAIRLAAYGGVYLLHGTNADFGIGMRVSSGCIRLRDDDIKTLFSQVTPGTKVNIINTPIKVSAEPNGARLVEVHQPLSEKIDDDPQLLPITLNSAMQSFKDAAQTDAEVMQHVMDVRSGMPVDVRRHQVSPQTL</sequence>
<dbReference type="EC" id="2.-.-.-"/>
<dbReference type="EMBL" id="U00096">
    <property type="protein sequence ID" value="AAC74197.1"/>
    <property type="molecule type" value="Genomic_DNA"/>
</dbReference>
<dbReference type="EMBL" id="AP009048">
    <property type="protein sequence ID" value="BAA35928.1"/>
    <property type="molecule type" value="Genomic_DNA"/>
</dbReference>
<dbReference type="PIR" id="F64855">
    <property type="entry name" value="F64855"/>
</dbReference>
<dbReference type="RefSeq" id="NP_415631.1">
    <property type="nucleotide sequence ID" value="NC_000913.3"/>
</dbReference>
<dbReference type="RefSeq" id="WP_001350500.1">
    <property type="nucleotide sequence ID" value="NZ_CP064677.1"/>
</dbReference>
<dbReference type="SMR" id="P75954"/>
<dbReference type="BioGRID" id="4260085">
    <property type="interactions" value="12"/>
</dbReference>
<dbReference type="DIP" id="DIP-11546N"/>
<dbReference type="FunCoup" id="P75954">
    <property type="interactions" value="110"/>
</dbReference>
<dbReference type="IntAct" id="P75954">
    <property type="interactions" value="2"/>
</dbReference>
<dbReference type="STRING" id="511145.b1113"/>
<dbReference type="MEROPS" id="C82.A05"/>
<dbReference type="PaxDb" id="511145-b1113"/>
<dbReference type="EnsemblBacteria" id="AAC74197">
    <property type="protein sequence ID" value="AAC74197"/>
    <property type="gene ID" value="b1113"/>
</dbReference>
<dbReference type="GeneID" id="945666"/>
<dbReference type="KEGG" id="ecj:JW5820"/>
<dbReference type="KEGG" id="eco:b1113"/>
<dbReference type="PATRIC" id="fig|511145.12.peg.1157"/>
<dbReference type="EchoBASE" id="EB3211"/>
<dbReference type="eggNOG" id="COG1376">
    <property type="taxonomic scope" value="Bacteria"/>
</dbReference>
<dbReference type="eggNOG" id="COG1388">
    <property type="taxonomic scope" value="Bacteria"/>
</dbReference>
<dbReference type="HOGENOM" id="CLU_046834_0_0_6"/>
<dbReference type="InParanoid" id="P75954"/>
<dbReference type="PhylomeDB" id="P75954"/>
<dbReference type="BioCyc" id="EcoCyc:G6571-MONOMER"/>
<dbReference type="BioCyc" id="MetaCyc:G6571-MONOMER"/>
<dbReference type="UniPathway" id="UPA00219"/>
<dbReference type="PRO" id="PR:P75954"/>
<dbReference type="Proteomes" id="UP000000625">
    <property type="component" value="Chromosome"/>
</dbReference>
<dbReference type="GO" id="GO:0042597">
    <property type="term" value="C:periplasmic space"/>
    <property type="evidence" value="ECO:0007669"/>
    <property type="project" value="UniProtKB-SubCell"/>
</dbReference>
<dbReference type="GO" id="GO:0016757">
    <property type="term" value="F:glycosyltransferase activity"/>
    <property type="evidence" value="ECO:0007669"/>
    <property type="project" value="UniProtKB-KW"/>
</dbReference>
<dbReference type="GO" id="GO:0071972">
    <property type="term" value="F:peptidoglycan L,D-transpeptidase activity"/>
    <property type="evidence" value="ECO:0000314"/>
    <property type="project" value="EcoCyc"/>
</dbReference>
<dbReference type="GO" id="GO:0071555">
    <property type="term" value="P:cell wall organization"/>
    <property type="evidence" value="ECO:0007669"/>
    <property type="project" value="UniProtKB-KW"/>
</dbReference>
<dbReference type="GO" id="GO:0018104">
    <property type="term" value="P:peptidoglycan-protein cross-linking"/>
    <property type="evidence" value="ECO:0000315"/>
    <property type="project" value="EcoCyc"/>
</dbReference>
<dbReference type="GO" id="GO:0008360">
    <property type="term" value="P:regulation of cell shape"/>
    <property type="evidence" value="ECO:0007669"/>
    <property type="project" value="UniProtKB-KW"/>
</dbReference>
<dbReference type="CDD" id="cd00118">
    <property type="entry name" value="LysM"/>
    <property type="match status" value="1"/>
</dbReference>
<dbReference type="CDD" id="cd16913">
    <property type="entry name" value="YkuD_like"/>
    <property type="match status" value="1"/>
</dbReference>
<dbReference type="FunFam" id="2.40.440.10:FF:000001">
    <property type="entry name" value="L,D-transpeptidase YbiS"/>
    <property type="match status" value="1"/>
</dbReference>
<dbReference type="FunFam" id="3.10.350.10:FF:000007">
    <property type="entry name" value="Probable L,D-transpeptidase YcfS"/>
    <property type="match status" value="1"/>
</dbReference>
<dbReference type="Gene3D" id="2.40.440.10">
    <property type="entry name" value="L,D-transpeptidase catalytic domain-like"/>
    <property type="match status" value="1"/>
</dbReference>
<dbReference type="Gene3D" id="3.10.350.10">
    <property type="entry name" value="LysM domain"/>
    <property type="match status" value="1"/>
</dbReference>
<dbReference type="InterPro" id="IPR050979">
    <property type="entry name" value="LD-transpeptidase"/>
</dbReference>
<dbReference type="InterPro" id="IPR005490">
    <property type="entry name" value="LD_TPept_cat_dom"/>
</dbReference>
<dbReference type="InterPro" id="IPR041597">
    <property type="entry name" value="Ldt_C"/>
</dbReference>
<dbReference type="InterPro" id="IPR018392">
    <property type="entry name" value="LysM_dom"/>
</dbReference>
<dbReference type="InterPro" id="IPR036779">
    <property type="entry name" value="LysM_dom_sf"/>
</dbReference>
<dbReference type="InterPro" id="IPR038063">
    <property type="entry name" value="Transpep_catalytic_dom"/>
</dbReference>
<dbReference type="PANTHER" id="PTHR30582">
    <property type="entry name" value="L,D-TRANSPEPTIDASE"/>
    <property type="match status" value="1"/>
</dbReference>
<dbReference type="PANTHER" id="PTHR30582:SF27">
    <property type="entry name" value="L,D-TRANSPEPTIDASE YCFS-RELATED"/>
    <property type="match status" value="1"/>
</dbReference>
<dbReference type="Pfam" id="PF17969">
    <property type="entry name" value="Ldt_C"/>
    <property type="match status" value="1"/>
</dbReference>
<dbReference type="Pfam" id="PF01476">
    <property type="entry name" value="LysM"/>
    <property type="match status" value="1"/>
</dbReference>
<dbReference type="Pfam" id="PF03734">
    <property type="entry name" value="YkuD"/>
    <property type="match status" value="1"/>
</dbReference>
<dbReference type="SMART" id="SM00257">
    <property type="entry name" value="LysM"/>
    <property type="match status" value="1"/>
</dbReference>
<dbReference type="SUPFAM" id="SSF141523">
    <property type="entry name" value="L,D-transpeptidase catalytic domain-like"/>
    <property type="match status" value="1"/>
</dbReference>
<dbReference type="PROSITE" id="PS52029">
    <property type="entry name" value="LD_TPASE"/>
    <property type="match status" value="1"/>
</dbReference>
<dbReference type="PROSITE" id="PS51782">
    <property type="entry name" value="LYSM"/>
    <property type="match status" value="1"/>
</dbReference>
<protein>
    <recommendedName>
        <fullName>Probable L,D-transpeptidase YcfS</fullName>
        <ecNumber>2.-.-.-</ecNumber>
    </recommendedName>
</protein>
<name>YCFS_ECOLI</name>
<reference key="1">
    <citation type="journal article" date="1996" name="DNA Res.">
        <title>A 718-kb DNA sequence of the Escherichia coli K-12 genome corresponding to the 12.7-28.0 min region on the linkage map.</title>
        <authorList>
            <person name="Oshima T."/>
            <person name="Aiba H."/>
            <person name="Baba T."/>
            <person name="Fujita K."/>
            <person name="Hayashi K."/>
            <person name="Honjo A."/>
            <person name="Ikemoto K."/>
            <person name="Inada T."/>
            <person name="Itoh T."/>
            <person name="Kajihara M."/>
            <person name="Kanai K."/>
            <person name="Kashimoto K."/>
            <person name="Kimura S."/>
            <person name="Kitagawa M."/>
            <person name="Makino K."/>
            <person name="Masuda S."/>
            <person name="Miki T."/>
            <person name="Mizobuchi K."/>
            <person name="Mori H."/>
            <person name="Motomura K."/>
            <person name="Nakamura Y."/>
            <person name="Nashimoto H."/>
            <person name="Nishio Y."/>
            <person name="Saito N."/>
            <person name="Sampei G."/>
            <person name="Seki Y."/>
            <person name="Tagami H."/>
            <person name="Takemoto K."/>
            <person name="Wada C."/>
            <person name="Yamamoto Y."/>
            <person name="Yano M."/>
            <person name="Horiuchi T."/>
        </authorList>
    </citation>
    <scope>NUCLEOTIDE SEQUENCE [LARGE SCALE GENOMIC DNA]</scope>
    <source>
        <strain>K12 / W3110 / ATCC 27325 / DSM 5911</strain>
    </source>
</reference>
<reference key="2">
    <citation type="journal article" date="1997" name="Science">
        <title>The complete genome sequence of Escherichia coli K-12.</title>
        <authorList>
            <person name="Blattner F.R."/>
            <person name="Plunkett G. III"/>
            <person name="Bloch C.A."/>
            <person name="Perna N.T."/>
            <person name="Burland V."/>
            <person name="Riley M."/>
            <person name="Collado-Vides J."/>
            <person name="Glasner J.D."/>
            <person name="Rode C.K."/>
            <person name="Mayhew G.F."/>
            <person name="Gregor J."/>
            <person name="Davis N.W."/>
            <person name="Kirkpatrick H.A."/>
            <person name="Goeden M.A."/>
            <person name="Rose D.J."/>
            <person name="Mau B."/>
            <person name="Shao Y."/>
        </authorList>
    </citation>
    <scope>NUCLEOTIDE SEQUENCE [LARGE SCALE GENOMIC DNA]</scope>
    <source>
        <strain>K12 / MG1655 / ATCC 47076</strain>
    </source>
</reference>
<reference key="3">
    <citation type="journal article" date="2006" name="Mol. Syst. Biol.">
        <title>Highly accurate genome sequences of Escherichia coli K-12 strains MG1655 and W3110.</title>
        <authorList>
            <person name="Hayashi K."/>
            <person name="Morooka N."/>
            <person name="Yamamoto Y."/>
            <person name="Fujita K."/>
            <person name="Isono K."/>
            <person name="Choi S."/>
            <person name="Ohtsubo E."/>
            <person name="Baba T."/>
            <person name="Wanner B.L."/>
            <person name="Mori H."/>
            <person name="Horiuchi T."/>
        </authorList>
    </citation>
    <scope>NUCLEOTIDE SEQUENCE [LARGE SCALE GENOMIC DNA]</scope>
    <source>
        <strain>K12 / W3110 / ATCC 27325 / DSM 5911</strain>
    </source>
</reference>
<reference key="4">
    <citation type="journal article" date="2008" name="J. Bacteriol.">
        <title>Identification of the L,D-transpeptidases for peptidoglycan cross-linking in Escherichia coli.</title>
        <authorList>
            <person name="Magnet S."/>
            <person name="Dubost L."/>
            <person name="Marie A."/>
            <person name="Arthur M."/>
            <person name="Gutmann L."/>
        </authorList>
    </citation>
    <scope>FUNCTION</scope>
    <scope>DISRUPTION PHENOTYPE</scope>
    <source>
        <strain>K12 / BW25113</strain>
    </source>
</reference>
<reference key="5">
    <citation type="journal article" date="2009" name="Science">
        <title>A periplasmic reducing system protects single cysteine residues from oxidation.</title>
        <authorList>
            <person name="Depuydt M."/>
            <person name="Leonard S.E."/>
            <person name="Vertommen D."/>
            <person name="Denoncin K."/>
            <person name="Morsomme P."/>
            <person name="Wahni K."/>
            <person name="Messens J."/>
            <person name="Carroll K.S."/>
            <person name="Collet J.F."/>
        </authorList>
    </citation>
    <scope>IDENTIFICATION BY MASS SPECTROMETRY</scope>
    <scope>INTERACTION WITH DSBG</scope>
    <source>
        <strain>K12 / MC1000 / ATCC 39531</strain>
    </source>
</reference>
<keyword id="KW-0133">Cell shape</keyword>
<keyword id="KW-0961">Cell wall biogenesis/degradation</keyword>
<keyword id="KW-0328">Glycosyltransferase</keyword>
<keyword id="KW-0378">Hydrolase</keyword>
<keyword id="KW-0573">Peptidoglycan synthesis</keyword>
<keyword id="KW-0574">Periplasm</keyword>
<keyword id="KW-1185">Reference proteome</keyword>
<keyword id="KW-0732">Signal</keyword>
<keyword id="KW-0808">Transferase</keyword>
<evidence type="ECO:0000255" key="1"/>
<evidence type="ECO:0000255" key="2">
    <source>
        <dbReference type="PROSITE-ProRule" id="PRU01118"/>
    </source>
</evidence>
<evidence type="ECO:0000255" key="3">
    <source>
        <dbReference type="PROSITE-ProRule" id="PRU01373"/>
    </source>
</evidence>
<evidence type="ECO:0000269" key="4">
    <source>
    </source>
</evidence>
<evidence type="ECO:0000269" key="5">
    <source>
    </source>
</evidence>
<evidence type="ECO:0000305" key="6"/>
<accession>P75954</accession>
<feature type="signal peptide" evidence="1">
    <location>
        <begin position="1"/>
        <end position="23"/>
    </location>
</feature>
<feature type="chain" id="PRO_0000013826" description="Probable L,D-transpeptidase YcfS">
    <location>
        <begin position="24"/>
        <end position="320"/>
    </location>
</feature>
<feature type="domain" description="LysM" evidence="2">
    <location>
        <begin position="45"/>
        <end position="90"/>
    </location>
</feature>
<feature type="domain" description="L,D-TPase catalytic" evidence="3">
    <location>
        <begin position="102"/>
        <end position="241"/>
    </location>
</feature>
<feature type="active site" description="Proton donor/acceptor" evidence="3">
    <location>
        <position position="201"/>
    </location>
</feature>
<feature type="active site" description="Nucleophile" evidence="3">
    <location>
        <position position="217"/>
    </location>
</feature>
<organism>
    <name type="scientific">Escherichia coli (strain K12)</name>
    <dbReference type="NCBI Taxonomy" id="83333"/>
    <lineage>
        <taxon>Bacteria</taxon>
        <taxon>Pseudomonadati</taxon>
        <taxon>Pseudomonadota</taxon>
        <taxon>Gammaproteobacteria</taxon>
        <taxon>Enterobacterales</taxon>
        <taxon>Enterobacteriaceae</taxon>
        <taxon>Escherichia</taxon>
    </lineage>
</organism>